<organism>
    <name type="scientific">Exiguobacterium sibiricum (strain DSM 17290 / CCUG 55495 / CIP 109462 / JCM 13490 / 255-15)</name>
    <dbReference type="NCBI Taxonomy" id="262543"/>
    <lineage>
        <taxon>Bacteria</taxon>
        <taxon>Bacillati</taxon>
        <taxon>Bacillota</taxon>
        <taxon>Bacilli</taxon>
        <taxon>Bacillales</taxon>
        <taxon>Bacillales Family XII. Incertae Sedis</taxon>
        <taxon>Exiguobacterium</taxon>
    </lineage>
</organism>
<name>DTD_EXIS2</name>
<reference key="1">
    <citation type="submission" date="2008-04" db="EMBL/GenBank/DDBJ databases">
        <title>Complete sequence of chromosome of Exiguobacterium sibiricum 255-15.</title>
        <authorList>
            <consortium name="US DOE Joint Genome Institute"/>
            <person name="Copeland A."/>
            <person name="Lucas S."/>
            <person name="Lapidus A."/>
            <person name="Glavina del Rio T."/>
            <person name="Dalin E."/>
            <person name="Tice H."/>
            <person name="Bruce D."/>
            <person name="Goodwin L."/>
            <person name="Pitluck S."/>
            <person name="Kiss H."/>
            <person name="Chertkov O."/>
            <person name="Monk C."/>
            <person name="Brettin T."/>
            <person name="Detter J.C."/>
            <person name="Han C."/>
            <person name="Kuske C.R."/>
            <person name="Schmutz J."/>
            <person name="Larimer F."/>
            <person name="Land M."/>
            <person name="Hauser L."/>
            <person name="Kyrpides N."/>
            <person name="Mikhailova N."/>
            <person name="Vishnivetskaya T."/>
            <person name="Rodrigues D.F."/>
            <person name="Gilichinsky D."/>
            <person name="Tiedje J."/>
            <person name="Richardson P."/>
        </authorList>
    </citation>
    <scope>NUCLEOTIDE SEQUENCE [LARGE SCALE GENOMIC DNA]</scope>
    <source>
        <strain>DSM 17290 / CCUG 55495 / CIP 109462 / JCM 13490 / 255-15</strain>
    </source>
</reference>
<gene>
    <name evidence="1" type="primary">dtd</name>
    <name type="ordered locus">Exig_2088</name>
</gene>
<protein>
    <recommendedName>
        <fullName evidence="1">D-aminoacyl-tRNA deacylase</fullName>
        <shortName evidence="1">DTD</shortName>
        <ecNumber evidence="1">3.1.1.96</ecNumber>
    </recommendedName>
    <alternativeName>
        <fullName evidence="1">Gly-tRNA(Ala) deacylase</fullName>
    </alternativeName>
</protein>
<proteinExistence type="inferred from homology"/>
<keyword id="KW-0963">Cytoplasm</keyword>
<keyword id="KW-0378">Hydrolase</keyword>
<keyword id="KW-1185">Reference proteome</keyword>
<keyword id="KW-0694">RNA-binding</keyword>
<keyword id="KW-0820">tRNA-binding</keyword>
<accession>B1YJF9</accession>
<dbReference type="EC" id="3.1.1.96" evidence="1"/>
<dbReference type="EMBL" id="CP001022">
    <property type="protein sequence ID" value="ACB61540.1"/>
    <property type="molecule type" value="Genomic_DNA"/>
</dbReference>
<dbReference type="RefSeq" id="WP_012370957.1">
    <property type="nucleotide sequence ID" value="NC_010556.1"/>
</dbReference>
<dbReference type="SMR" id="B1YJF9"/>
<dbReference type="STRING" id="262543.Exig_2088"/>
<dbReference type="KEGG" id="esi:Exig_2088"/>
<dbReference type="eggNOG" id="COG1490">
    <property type="taxonomic scope" value="Bacteria"/>
</dbReference>
<dbReference type="HOGENOM" id="CLU_076901_1_0_9"/>
<dbReference type="OrthoDB" id="9801395at2"/>
<dbReference type="Proteomes" id="UP000001681">
    <property type="component" value="Chromosome"/>
</dbReference>
<dbReference type="GO" id="GO:0005737">
    <property type="term" value="C:cytoplasm"/>
    <property type="evidence" value="ECO:0007669"/>
    <property type="project" value="UniProtKB-SubCell"/>
</dbReference>
<dbReference type="GO" id="GO:0051500">
    <property type="term" value="F:D-tyrosyl-tRNA(Tyr) deacylase activity"/>
    <property type="evidence" value="ECO:0007669"/>
    <property type="project" value="TreeGrafter"/>
</dbReference>
<dbReference type="GO" id="GO:0106026">
    <property type="term" value="F:Gly-tRNA(Ala) deacylase activity"/>
    <property type="evidence" value="ECO:0007669"/>
    <property type="project" value="UniProtKB-UniRule"/>
</dbReference>
<dbReference type="GO" id="GO:0043908">
    <property type="term" value="F:Ser(Gly)-tRNA(Ala) hydrolase activity"/>
    <property type="evidence" value="ECO:0007669"/>
    <property type="project" value="UniProtKB-UniRule"/>
</dbReference>
<dbReference type="GO" id="GO:0000049">
    <property type="term" value="F:tRNA binding"/>
    <property type="evidence" value="ECO:0007669"/>
    <property type="project" value="UniProtKB-UniRule"/>
</dbReference>
<dbReference type="GO" id="GO:0019478">
    <property type="term" value="P:D-amino acid catabolic process"/>
    <property type="evidence" value="ECO:0007669"/>
    <property type="project" value="UniProtKB-UniRule"/>
</dbReference>
<dbReference type="CDD" id="cd00563">
    <property type="entry name" value="Dtyr_deacylase"/>
    <property type="match status" value="1"/>
</dbReference>
<dbReference type="FunFam" id="3.50.80.10:FF:000001">
    <property type="entry name" value="D-aminoacyl-tRNA deacylase"/>
    <property type="match status" value="1"/>
</dbReference>
<dbReference type="Gene3D" id="3.50.80.10">
    <property type="entry name" value="D-tyrosyl-tRNA(Tyr) deacylase"/>
    <property type="match status" value="1"/>
</dbReference>
<dbReference type="HAMAP" id="MF_00518">
    <property type="entry name" value="Deacylase_Dtd"/>
    <property type="match status" value="1"/>
</dbReference>
<dbReference type="InterPro" id="IPR003732">
    <property type="entry name" value="Daa-tRNA_deacyls_DTD"/>
</dbReference>
<dbReference type="InterPro" id="IPR023509">
    <property type="entry name" value="DTD-like_sf"/>
</dbReference>
<dbReference type="NCBIfam" id="TIGR00256">
    <property type="entry name" value="D-aminoacyl-tRNA deacylase"/>
    <property type="match status" value="1"/>
</dbReference>
<dbReference type="PANTHER" id="PTHR10472:SF5">
    <property type="entry name" value="D-AMINOACYL-TRNA DEACYLASE 1"/>
    <property type="match status" value="1"/>
</dbReference>
<dbReference type="PANTHER" id="PTHR10472">
    <property type="entry name" value="D-TYROSYL-TRNA TYR DEACYLASE"/>
    <property type="match status" value="1"/>
</dbReference>
<dbReference type="Pfam" id="PF02580">
    <property type="entry name" value="Tyr_Deacylase"/>
    <property type="match status" value="1"/>
</dbReference>
<dbReference type="SUPFAM" id="SSF69500">
    <property type="entry name" value="DTD-like"/>
    <property type="match status" value="1"/>
</dbReference>
<evidence type="ECO:0000255" key="1">
    <source>
        <dbReference type="HAMAP-Rule" id="MF_00518"/>
    </source>
</evidence>
<comment type="function">
    <text evidence="1">An aminoacyl-tRNA editing enzyme that deacylates mischarged D-aminoacyl-tRNAs. Also deacylates mischarged glycyl-tRNA(Ala), protecting cells against glycine mischarging by AlaRS. Acts via tRNA-based rather than protein-based catalysis; rejects L-amino acids rather than detecting D-amino acids in the active site. By recycling D-aminoacyl-tRNA to D-amino acids and free tRNA molecules, this enzyme counteracts the toxicity associated with the formation of D-aminoacyl-tRNA entities in vivo and helps enforce protein L-homochirality.</text>
</comment>
<comment type="catalytic activity">
    <reaction evidence="1">
        <text>glycyl-tRNA(Ala) + H2O = tRNA(Ala) + glycine + H(+)</text>
        <dbReference type="Rhea" id="RHEA:53744"/>
        <dbReference type="Rhea" id="RHEA-COMP:9657"/>
        <dbReference type="Rhea" id="RHEA-COMP:13640"/>
        <dbReference type="ChEBI" id="CHEBI:15377"/>
        <dbReference type="ChEBI" id="CHEBI:15378"/>
        <dbReference type="ChEBI" id="CHEBI:57305"/>
        <dbReference type="ChEBI" id="CHEBI:78442"/>
        <dbReference type="ChEBI" id="CHEBI:78522"/>
        <dbReference type="EC" id="3.1.1.96"/>
    </reaction>
</comment>
<comment type="catalytic activity">
    <reaction evidence="1">
        <text>a D-aminoacyl-tRNA + H2O = a tRNA + a D-alpha-amino acid + H(+)</text>
        <dbReference type="Rhea" id="RHEA:13953"/>
        <dbReference type="Rhea" id="RHEA-COMP:10123"/>
        <dbReference type="Rhea" id="RHEA-COMP:10124"/>
        <dbReference type="ChEBI" id="CHEBI:15377"/>
        <dbReference type="ChEBI" id="CHEBI:15378"/>
        <dbReference type="ChEBI" id="CHEBI:59871"/>
        <dbReference type="ChEBI" id="CHEBI:78442"/>
        <dbReference type="ChEBI" id="CHEBI:79333"/>
        <dbReference type="EC" id="3.1.1.96"/>
    </reaction>
</comment>
<comment type="subunit">
    <text evidence="1">Homodimer.</text>
</comment>
<comment type="subcellular location">
    <subcellularLocation>
        <location evidence="1">Cytoplasm</location>
    </subcellularLocation>
</comment>
<comment type="domain">
    <text evidence="1">A Gly-cisPro motif from one monomer fits into the active site of the other monomer to allow specific chiral rejection of L-amino acids.</text>
</comment>
<comment type="similarity">
    <text evidence="1">Belongs to the DTD family.</text>
</comment>
<feature type="chain" id="PRO_1000127533" description="D-aminoacyl-tRNA deacylase">
    <location>
        <begin position="1"/>
        <end position="145"/>
    </location>
</feature>
<feature type="short sequence motif" description="Gly-cisPro motif, important for rejection of L-amino acids" evidence="1">
    <location>
        <begin position="137"/>
        <end position="138"/>
    </location>
</feature>
<sequence length="145" mass="16078">MRVVLQRVKEASVTVEGTVAGQIDQGFLLLVGVTHDDTLEQVNWLADKIAGLRVFEDEEERMNRSLQDVEGKILSVSQFTLYGDVKKGRRPAFTEAAKPDVANELYEAFNARLRQQGIIVETGQFGAMMDVALVNDGPVTLILEK</sequence>